<keyword id="KW-0028">Amino-acid biosynthesis</keyword>
<keyword id="KW-0963">Cytoplasm</keyword>
<keyword id="KW-0368">Histidine biosynthesis</keyword>
<keyword id="KW-0456">Lyase</keyword>
<keyword id="KW-1185">Reference proteome</keyword>
<organism>
    <name type="scientific">Sulfolobus acidocaldarius (strain ATCC 33909 / DSM 639 / JCM 8929 / NBRC 15157 / NCIMB 11770)</name>
    <dbReference type="NCBI Taxonomy" id="330779"/>
    <lineage>
        <taxon>Archaea</taxon>
        <taxon>Thermoproteota</taxon>
        <taxon>Thermoprotei</taxon>
        <taxon>Sulfolobales</taxon>
        <taxon>Sulfolobaceae</taxon>
        <taxon>Sulfolobus</taxon>
    </lineage>
</organism>
<gene>
    <name evidence="1" type="primary">hisB</name>
    <name type="ordered locus">Saci_1577</name>
</gene>
<dbReference type="EC" id="4.2.1.19" evidence="1"/>
<dbReference type="EMBL" id="CP000077">
    <property type="protein sequence ID" value="AAY80890.1"/>
    <property type="molecule type" value="Genomic_DNA"/>
</dbReference>
<dbReference type="RefSeq" id="WP_011278392.1">
    <property type="nucleotide sequence ID" value="NC_007181.1"/>
</dbReference>
<dbReference type="SMR" id="Q4J8J1"/>
<dbReference type="STRING" id="330779.Saci_1577"/>
<dbReference type="GeneID" id="14552070"/>
<dbReference type="KEGG" id="sai:Saci_1577"/>
<dbReference type="PATRIC" id="fig|330779.12.peg.1517"/>
<dbReference type="eggNOG" id="arCOG04398">
    <property type="taxonomic scope" value="Archaea"/>
</dbReference>
<dbReference type="HOGENOM" id="CLU_044308_3_0_2"/>
<dbReference type="UniPathway" id="UPA00031">
    <property type="reaction ID" value="UER00011"/>
</dbReference>
<dbReference type="Proteomes" id="UP000001018">
    <property type="component" value="Chromosome"/>
</dbReference>
<dbReference type="GO" id="GO:0005737">
    <property type="term" value="C:cytoplasm"/>
    <property type="evidence" value="ECO:0007669"/>
    <property type="project" value="UniProtKB-SubCell"/>
</dbReference>
<dbReference type="GO" id="GO:0004424">
    <property type="term" value="F:imidazoleglycerol-phosphate dehydratase activity"/>
    <property type="evidence" value="ECO:0007669"/>
    <property type="project" value="UniProtKB-UniRule"/>
</dbReference>
<dbReference type="GO" id="GO:0000105">
    <property type="term" value="P:L-histidine biosynthetic process"/>
    <property type="evidence" value="ECO:0007669"/>
    <property type="project" value="UniProtKB-UniRule"/>
</dbReference>
<dbReference type="CDD" id="cd07914">
    <property type="entry name" value="IGPD"/>
    <property type="match status" value="1"/>
</dbReference>
<dbReference type="FunFam" id="3.30.230.40:FF:000001">
    <property type="entry name" value="Imidazoleglycerol-phosphate dehydratase HisB"/>
    <property type="match status" value="1"/>
</dbReference>
<dbReference type="FunFam" id="3.30.230.40:FF:000003">
    <property type="entry name" value="Imidazoleglycerol-phosphate dehydratase HisB"/>
    <property type="match status" value="1"/>
</dbReference>
<dbReference type="Gene3D" id="3.30.230.40">
    <property type="entry name" value="Imidazole glycerol phosphate dehydratase, domain 1"/>
    <property type="match status" value="2"/>
</dbReference>
<dbReference type="HAMAP" id="MF_00076">
    <property type="entry name" value="HisB"/>
    <property type="match status" value="1"/>
</dbReference>
<dbReference type="InterPro" id="IPR038494">
    <property type="entry name" value="IGPD_sf"/>
</dbReference>
<dbReference type="InterPro" id="IPR000807">
    <property type="entry name" value="ImidazoleglycerolP_deHydtase"/>
</dbReference>
<dbReference type="InterPro" id="IPR020565">
    <property type="entry name" value="ImidazoleglycerP_deHydtase_CS"/>
</dbReference>
<dbReference type="InterPro" id="IPR020568">
    <property type="entry name" value="Ribosomal_Su5_D2-typ_SF"/>
</dbReference>
<dbReference type="NCBIfam" id="NF010121">
    <property type="entry name" value="PRK13598.1"/>
    <property type="match status" value="1"/>
</dbReference>
<dbReference type="PANTHER" id="PTHR23133:SF2">
    <property type="entry name" value="IMIDAZOLEGLYCEROL-PHOSPHATE DEHYDRATASE"/>
    <property type="match status" value="1"/>
</dbReference>
<dbReference type="PANTHER" id="PTHR23133">
    <property type="entry name" value="IMIDAZOLEGLYCEROL-PHOSPHATE DEHYDRATASE HIS7"/>
    <property type="match status" value="1"/>
</dbReference>
<dbReference type="Pfam" id="PF00475">
    <property type="entry name" value="IGPD"/>
    <property type="match status" value="1"/>
</dbReference>
<dbReference type="SUPFAM" id="SSF54211">
    <property type="entry name" value="Ribosomal protein S5 domain 2-like"/>
    <property type="match status" value="2"/>
</dbReference>
<dbReference type="PROSITE" id="PS00954">
    <property type="entry name" value="IGP_DEHYDRATASE_1"/>
    <property type="match status" value="1"/>
</dbReference>
<dbReference type="PROSITE" id="PS00955">
    <property type="entry name" value="IGP_DEHYDRATASE_2"/>
    <property type="match status" value="1"/>
</dbReference>
<sequence length="193" mass="21900">MSRSISKLRETKETKVEIFLDIDNKGEIEVSTPVNFFNHMLYTLLYYMNSTAKVNVVDRQNYDDHHVVEDTAITLGQAFKEVLGDKKGIRRFANTIIPMDDALVLVAVDISGRGVSNVEFKLKRNTIGDLAIENIYHFFSSFSYHSGVNLHVIQLRGKNTHHVLEASFKGLGMSLYEASRILFEEVRSLKGSL</sequence>
<evidence type="ECO:0000255" key="1">
    <source>
        <dbReference type="HAMAP-Rule" id="MF_00076"/>
    </source>
</evidence>
<accession>Q4J8J1</accession>
<name>HIS7_SULAC</name>
<reference key="1">
    <citation type="journal article" date="2005" name="J. Bacteriol.">
        <title>The genome of Sulfolobus acidocaldarius, a model organism of the Crenarchaeota.</title>
        <authorList>
            <person name="Chen L."/>
            <person name="Bruegger K."/>
            <person name="Skovgaard M."/>
            <person name="Redder P."/>
            <person name="She Q."/>
            <person name="Torarinsson E."/>
            <person name="Greve B."/>
            <person name="Awayez M."/>
            <person name="Zibat A."/>
            <person name="Klenk H.-P."/>
            <person name="Garrett R.A."/>
        </authorList>
    </citation>
    <scope>NUCLEOTIDE SEQUENCE [LARGE SCALE GENOMIC DNA]</scope>
    <source>
        <strain>ATCC 33909 / DSM 639 / JCM 8929 / NBRC 15157 / NCIMB 11770</strain>
    </source>
</reference>
<comment type="catalytic activity">
    <reaction evidence="1">
        <text>D-erythro-1-(imidazol-4-yl)glycerol 3-phosphate = 3-(imidazol-4-yl)-2-oxopropyl phosphate + H2O</text>
        <dbReference type="Rhea" id="RHEA:11040"/>
        <dbReference type="ChEBI" id="CHEBI:15377"/>
        <dbReference type="ChEBI" id="CHEBI:57766"/>
        <dbReference type="ChEBI" id="CHEBI:58278"/>
        <dbReference type="EC" id="4.2.1.19"/>
    </reaction>
</comment>
<comment type="pathway">
    <text evidence="1">Amino-acid biosynthesis; L-histidine biosynthesis; L-histidine from 5-phospho-alpha-D-ribose 1-diphosphate: step 6/9.</text>
</comment>
<comment type="subcellular location">
    <subcellularLocation>
        <location evidence="1">Cytoplasm</location>
    </subcellularLocation>
</comment>
<comment type="similarity">
    <text evidence="1">Belongs to the imidazoleglycerol-phosphate dehydratase family.</text>
</comment>
<protein>
    <recommendedName>
        <fullName evidence="1">Imidazoleglycerol-phosphate dehydratase</fullName>
        <shortName evidence="1">IGPD</shortName>
        <ecNumber evidence="1">4.2.1.19</ecNumber>
    </recommendedName>
</protein>
<proteinExistence type="inferred from homology"/>
<feature type="chain" id="PRO_0000158196" description="Imidazoleglycerol-phosphate dehydratase">
    <location>
        <begin position="1"/>
        <end position="193"/>
    </location>
</feature>